<reference key="1">
    <citation type="journal article" date="2009" name="Stand. Genomic Sci.">
        <title>Complete genome sequence of Methanoculleus marisnigri Romesser et al. 1981 type strain JR1.</title>
        <authorList>
            <person name="Anderson I.J."/>
            <person name="Sieprawska-Lupa M."/>
            <person name="Lapidus A."/>
            <person name="Nolan M."/>
            <person name="Copeland A."/>
            <person name="Glavina Del Rio T."/>
            <person name="Tice H."/>
            <person name="Dalin E."/>
            <person name="Barry K."/>
            <person name="Saunders E."/>
            <person name="Han C."/>
            <person name="Brettin T."/>
            <person name="Detter J.C."/>
            <person name="Bruce D."/>
            <person name="Mikhailova N."/>
            <person name="Pitluck S."/>
            <person name="Hauser L."/>
            <person name="Land M."/>
            <person name="Lucas S."/>
            <person name="Richardson P."/>
            <person name="Whitman W.B."/>
            <person name="Kyrpides N.C."/>
        </authorList>
    </citation>
    <scope>NUCLEOTIDE SEQUENCE [LARGE SCALE GENOMIC DNA]</scope>
    <source>
        <strain>ATCC 35101 / DSM 1498 / JR1</strain>
    </source>
</reference>
<organism>
    <name type="scientific">Methanoculleus marisnigri (strain ATCC 35101 / DSM 1498 / JR1)</name>
    <dbReference type="NCBI Taxonomy" id="368407"/>
    <lineage>
        <taxon>Archaea</taxon>
        <taxon>Methanobacteriati</taxon>
        <taxon>Methanobacteriota</taxon>
        <taxon>Stenosarchaea group</taxon>
        <taxon>Methanomicrobia</taxon>
        <taxon>Methanomicrobiales</taxon>
        <taxon>Methanomicrobiaceae</taxon>
        <taxon>Methanoculleus</taxon>
    </lineage>
</organism>
<keyword id="KW-0030">Aminoacyl-tRNA synthetase</keyword>
<keyword id="KW-0067">ATP-binding</keyword>
<keyword id="KW-0963">Cytoplasm</keyword>
<keyword id="KW-0436">Ligase</keyword>
<keyword id="KW-0479">Metal-binding</keyword>
<keyword id="KW-0547">Nucleotide-binding</keyword>
<keyword id="KW-0648">Protein biosynthesis</keyword>
<keyword id="KW-0694">RNA-binding</keyword>
<keyword id="KW-0820">tRNA-binding</keyword>
<keyword id="KW-0862">Zinc</keyword>
<gene>
    <name evidence="1" type="primary">alaS</name>
    <name type="ordered locus">Memar_1513</name>
</gene>
<sequence>MLEEEYTLDYFRSEGFERKVCKSCGAAFWTRDPEQEFCGDAPCVTYNFIGNPVFKPHNVSEMREAFLSFFERHGHTRLERYPVAARWRDDIYLTIASIADFQPFVTSGVVPPPANPLTISQPCIRLNDLDSVGRSGRHLTLFEMMAHHAFNTPEEQIYWKDQTVALCDEFIKSIGGDPARVSYKEHPWYGGGNAGASVEVLIGGLEVATLVFMNLGRQKTDQPPVDVNGVPYYPMRLNIVDTGYGLERLVWASKGSPTIYDAVFPEMVSRLMRSARLEDLLDNPEFTKIMGLSARFAGVMDISGTNLYNLRRKVAEAIDVPVERLERIVVPIEKVYSIADHTRCLAYMLGDCIVPSNVREGYLARLVLRRTLRMMNDLSMDDALTDLIEAQMQVVGAENFEQDVDAVREIVENEEARYASTLERGARIVQKIARNYRAKSSRVPLEEVITLYDSHGIPPEMVKEVAAAEGAVVEIPDNFYSLIAETHSEAQKEARGEDPLDAYRERAVSLPPTKKLYYELPNEVEFEAMVLDYFDGMAVLDQTLFYPEGGGQPSDTGTLVTSESMVRVEEVVKLGEVILHRVTGGPLMRGDRVKGMVDEERRWSLMRHHTATHVLLHAAQQVLGVHVHQAGAQKGSEVSRLDIRHYRHITPDELRRIELEANRLVMADTPVYIHVEERTKAEQKYGFGLYQGGVPPGREIRTVQVGADVQACAGTHVRTTGEIGPIRVLGVEHIQDGVERLVFAAGIAAVHAVQHLGDLLQESADMVSVQPENLPATVARFFSEWKEQKKEIERLQKKVVDLEMQNLDGEVVDGVRVVVRTLDATHKELVALATTVADEGGVALFASSDGTVKVVATSGAPTVNAVDIVREVCGILGGKGGGKPNLAQGAGPDASRLEEALEYGRNRIIEALHGE</sequence>
<accession>A3CVP2</accession>
<protein>
    <recommendedName>
        <fullName evidence="1">Alanine--tRNA ligase</fullName>
        <ecNumber evidence="1">6.1.1.7</ecNumber>
    </recommendedName>
    <alternativeName>
        <fullName evidence="1">Alanyl-tRNA synthetase</fullName>
        <shortName evidence="1">AlaRS</shortName>
    </alternativeName>
</protein>
<comment type="function">
    <text evidence="1">Catalyzes the attachment of alanine to tRNA(Ala) in a two-step reaction: alanine is first activated by ATP to form Ala-AMP and then transferred to the acceptor end of tRNA(Ala). Also edits incorrectly charged Ser-tRNA(Ala) and Gly-tRNA(Ala) via its editing domain.</text>
</comment>
<comment type="catalytic activity">
    <reaction evidence="1">
        <text>tRNA(Ala) + L-alanine + ATP = L-alanyl-tRNA(Ala) + AMP + diphosphate</text>
        <dbReference type="Rhea" id="RHEA:12540"/>
        <dbReference type="Rhea" id="RHEA-COMP:9657"/>
        <dbReference type="Rhea" id="RHEA-COMP:9923"/>
        <dbReference type="ChEBI" id="CHEBI:30616"/>
        <dbReference type="ChEBI" id="CHEBI:33019"/>
        <dbReference type="ChEBI" id="CHEBI:57972"/>
        <dbReference type="ChEBI" id="CHEBI:78442"/>
        <dbReference type="ChEBI" id="CHEBI:78497"/>
        <dbReference type="ChEBI" id="CHEBI:456215"/>
        <dbReference type="EC" id="6.1.1.7"/>
    </reaction>
</comment>
<comment type="cofactor">
    <cofactor evidence="1">
        <name>Zn(2+)</name>
        <dbReference type="ChEBI" id="CHEBI:29105"/>
    </cofactor>
    <text evidence="1">Binds 1 zinc ion per subunit.</text>
</comment>
<comment type="subcellular location">
    <subcellularLocation>
        <location evidence="1">Cytoplasm</location>
    </subcellularLocation>
</comment>
<comment type="domain">
    <text evidence="1">Consists of three domains; the N-terminal catalytic domain, the editing domain and the C-terminal C-Ala domain. The editing domain removes incorrectly charged amino acids, while the C-Ala domain, along with tRNA(Ala), serves as a bridge to cooperatively bring together the editing and aminoacylation centers thus stimulating deacylation of misacylated tRNAs.</text>
</comment>
<comment type="similarity">
    <text evidence="1">Belongs to the class-II aminoacyl-tRNA synthetase family.</text>
</comment>
<name>SYA_METMJ</name>
<dbReference type="EC" id="6.1.1.7" evidence="1"/>
<dbReference type="EMBL" id="CP000562">
    <property type="protein sequence ID" value="ABN57442.1"/>
    <property type="molecule type" value="Genomic_DNA"/>
</dbReference>
<dbReference type="RefSeq" id="WP_011844353.1">
    <property type="nucleotide sequence ID" value="NC_009051.1"/>
</dbReference>
<dbReference type="SMR" id="A3CVP2"/>
<dbReference type="STRING" id="368407.Memar_1513"/>
<dbReference type="GeneID" id="4846756"/>
<dbReference type="GeneID" id="76729581"/>
<dbReference type="KEGG" id="mem:Memar_1513"/>
<dbReference type="eggNOG" id="arCOG01255">
    <property type="taxonomic scope" value="Archaea"/>
</dbReference>
<dbReference type="HOGENOM" id="CLU_004485_4_0_2"/>
<dbReference type="OrthoDB" id="7506at2157"/>
<dbReference type="Proteomes" id="UP000002146">
    <property type="component" value="Chromosome"/>
</dbReference>
<dbReference type="GO" id="GO:0005737">
    <property type="term" value="C:cytoplasm"/>
    <property type="evidence" value="ECO:0007669"/>
    <property type="project" value="UniProtKB-SubCell"/>
</dbReference>
<dbReference type="GO" id="GO:0004813">
    <property type="term" value="F:alanine-tRNA ligase activity"/>
    <property type="evidence" value="ECO:0007669"/>
    <property type="project" value="UniProtKB-UniRule"/>
</dbReference>
<dbReference type="GO" id="GO:0002161">
    <property type="term" value="F:aminoacyl-tRNA deacylase activity"/>
    <property type="evidence" value="ECO:0007669"/>
    <property type="project" value="UniProtKB-ARBA"/>
</dbReference>
<dbReference type="GO" id="GO:0005524">
    <property type="term" value="F:ATP binding"/>
    <property type="evidence" value="ECO:0007669"/>
    <property type="project" value="UniProtKB-UniRule"/>
</dbReference>
<dbReference type="GO" id="GO:0000049">
    <property type="term" value="F:tRNA binding"/>
    <property type="evidence" value="ECO:0007669"/>
    <property type="project" value="UniProtKB-KW"/>
</dbReference>
<dbReference type="GO" id="GO:0008270">
    <property type="term" value="F:zinc ion binding"/>
    <property type="evidence" value="ECO:0007669"/>
    <property type="project" value="UniProtKB-UniRule"/>
</dbReference>
<dbReference type="GO" id="GO:0006419">
    <property type="term" value="P:alanyl-tRNA aminoacylation"/>
    <property type="evidence" value="ECO:0007669"/>
    <property type="project" value="UniProtKB-UniRule"/>
</dbReference>
<dbReference type="CDD" id="cd00673">
    <property type="entry name" value="AlaRS_core"/>
    <property type="match status" value="1"/>
</dbReference>
<dbReference type="FunFam" id="3.10.310.40:FF:000001">
    <property type="entry name" value="Alanine--tRNA ligase"/>
    <property type="match status" value="1"/>
</dbReference>
<dbReference type="FunFam" id="3.30.930.10:FF:000056">
    <property type="entry name" value="Alanine--tRNA ligase"/>
    <property type="match status" value="1"/>
</dbReference>
<dbReference type="FunFam" id="3.30.980.10:FF:000004">
    <property type="entry name" value="Alanine--tRNA ligase, cytoplasmic"/>
    <property type="match status" value="1"/>
</dbReference>
<dbReference type="Gene3D" id="2.40.30.130">
    <property type="match status" value="1"/>
</dbReference>
<dbReference type="Gene3D" id="3.10.310.40">
    <property type="match status" value="1"/>
</dbReference>
<dbReference type="Gene3D" id="3.30.54.20">
    <property type="match status" value="1"/>
</dbReference>
<dbReference type="Gene3D" id="6.10.250.550">
    <property type="match status" value="1"/>
</dbReference>
<dbReference type="Gene3D" id="3.30.930.10">
    <property type="entry name" value="Bira Bifunctional Protein, Domain 2"/>
    <property type="match status" value="1"/>
</dbReference>
<dbReference type="Gene3D" id="3.30.980.10">
    <property type="entry name" value="Threonyl-trna Synthetase, Chain A, domain 2"/>
    <property type="match status" value="1"/>
</dbReference>
<dbReference type="HAMAP" id="MF_00036_A">
    <property type="entry name" value="Ala_tRNA_synth_A"/>
    <property type="match status" value="1"/>
</dbReference>
<dbReference type="InterPro" id="IPR045864">
    <property type="entry name" value="aa-tRNA-synth_II/BPL/LPL"/>
</dbReference>
<dbReference type="InterPro" id="IPR002318">
    <property type="entry name" value="Ala-tRNA-lgiase_IIc"/>
</dbReference>
<dbReference type="InterPro" id="IPR018162">
    <property type="entry name" value="Ala-tRNA-ligase_IIc_anticod-bd"/>
</dbReference>
<dbReference type="InterPro" id="IPR018165">
    <property type="entry name" value="Ala-tRNA-synth_IIc_core"/>
</dbReference>
<dbReference type="InterPro" id="IPR018164">
    <property type="entry name" value="Ala-tRNA-synth_IIc_N"/>
</dbReference>
<dbReference type="InterPro" id="IPR022429">
    <property type="entry name" value="Ala-tRNA_lgiase_arc"/>
</dbReference>
<dbReference type="InterPro" id="IPR050058">
    <property type="entry name" value="Ala-tRNA_ligase"/>
</dbReference>
<dbReference type="InterPro" id="IPR003156">
    <property type="entry name" value="DHHA1_dom"/>
</dbReference>
<dbReference type="InterPro" id="IPR018163">
    <property type="entry name" value="Thr/Ala-tRNA-synth_IIc_edit"/>
</dbReference>
<dbReference type="InterPro" id="IPR009000">
    <property type="entry name" value="Transl_B-barrel_sf"/>
</dbReference>
<dbReference type="InterPro" id="IPR012947">
    <property type="entry name" value="tRNA_SAD"/>
</dbReference>
<dbReference type="NCBIfam" id="TIGR03683">
    <property type="entry name" value="A-tRNA_syn_arch"/>
    <property type="match status" value="1"/>
</dbReference>
<dbReference type="NCBIfam" id="TIGR00344">
    <property type="entry name" value="alaS"/>
    <property type="match status" value="1"/>
</dbReference>
<dbReference type="PANTHER" id="PTHR11777:SF9">
    <property type="entry name" value="ALANINE--TRNA LIGASE, CYTOPLASMIC"/>
    <property type="match status" value="1"/>
</dbReference>
<dbReference type="PANTHER" id="PTHR11777">
    <property type="entry name" value="ALANYL-TRNA SYNTHETASE"/>
    <property type="match status" value="1"/>
</dbReference>
<dbReference type="Pfam" id="PF02272">
    <property type="entry name" value="DHHA1"/>
    <property type="match status" value="1"/>
</dbReference>
<dbReference type="Pfam" id="PF01411">
    <property type="entry name" value="tRNA-synt_2c"/>
    <property type="match status" value="1"/>
</dbReference>
<dbReference type="Pfam" id="PF07973">
    <property type="entry name" value="tRNA_SAD"/>
    <property type="match status" value="1"/>
</dbReference>
<dbReference type="PRINTS" id="PR00980">
    <property type="entry name" value="TRNASYNTHALA"/>
</dbReference>
<dbReference type="SMART" id="SM00863">
    <property type="entry name" value="tRNA_SAD"/>
    <property type="match status" value="1"/>
</dbReference>
<dbReference type="SUPFAM" id="SSF55681">
    <property type="entry name" value="Class II aaRS and biotin synthetases"/>
    <property type="match status" value="1"/>
</dbReference>
<dbReference type="SUPFAM" id="SSF101353">
    <property type="entry name" value="Putative anticodon-binding domain of alanyl-tRNA synthetase (AlaRS)"/>
    <property type="match status" value="1"/>
</dbReference>
<dbReference type="SUPFAM" id="SSF55186">
    <property type="entry name" value="ThrRS/AlaRS common domain"/>
    <property type="match status" value="1"/>
</dbReference>
<dbReference type="SUPFAM" id="SSF50447">
    <property type="entry name" value="Translation proteins"/>
    <property type="match status" value="1"/>
</dbReference>
<dbReference type="PROSITE" id="PS50860">
    <property type="entry name" value="AA_TRNA_LIGASE_II_ALA"/>
    <property type="match status" value="1"/>
</dbReference>
<proteinExistence type="inferred from homology"/>
<feature type="chain" id="PRO_1000074512" description="Alanine--tRNA ligase">
    <location>
        <begin position="1"/>
        <end position="915"/>
    </location>
</feature>
<feature type="binding site" evidence="1">
    <location>
        <position position="609"/>
    </location>
    <ligand>
        <name>Zn(2+)</name>
        <dbReference type="ChEBI" id="CHEBI:29105"/>
    </ligand>
</feature>
<feature type="binding site" evidence="1">
    <location>
        <position position="613"/>
    </location>
    <ligand>
        <name>Zn(2+)</name>
        <dbReference type="ChEBI" id="CHEBI:29105"/>
    </ligand>
</feature>
<feature type="binding site" evidence="1">
    <location>
        <position position="712"/>
    </location>
    <ligand>
        <name>Zn(2+)</name>
        <dbReference type="ChEBI" id="CHEBI:29105"/>
    </ligand>
</feature>
<feature type="binding site" evidence="1">
    <location>
        <position position="716"/>
    </location>
    <ligand>
        <name>Zn(2+)</name>
        <dbReference type="ChEBI" id="CHEBI:29105"/>
    </ligand>
</feature>
<evidence type="ECO:0000255" key="1">
    <source>
        <dbReference type="HAMAP-Rule" id="MF_00036"/>
    </source>
</evidence>